<organism>
    <name type="scientific">Prochlorococcus marinus (strain MIT 9313)</name>
    <dbReference type="NCBI Taxonomy" id="74547"/>
    <lineage>
        <taxon>Bacteria</taxon>
        <taxon>Bacillati</taxon>
        <taxon>Cyanobacteriota</taxon>
        <taxon>Cyanophyceae</taxon>
        <taxon>Synechococcales</taxon>
        <taxon>Prochlorococcaceae</taxon>
        <taxon>Prochlorococcus</taxon>
    </lineage>
</organism>
<keyword id="KW-0414">Isoprene biosynthesis</keyword>
<keyword id="KW-0464">Manganese</keyword>
<keyword id="KW-0479">Metal-binding</keyword>
<keyword id="KW-0521">NADP</keyword>
<keyword id="KW-0560">Oxidoreductase</keyword>
<keyword id="KW-1185">Reference proteome</keyword>
<accession>Q7V6J8</accession>
<evidence type="ECO:0000255" key="1">
    <source>
        <dbReference type="HAMAP-Rule" id="MF_00183"/>
    </source>
</evidence>
<gene>
    <name evidence="1" type="primary">dxr</name>
    <name type="ordered locus">PMT_1161</name>
</gene>
<sequence length="412" mass="44668">MLGSTGSIGTQTLEIAEEFPERFRVVALTAGTNVSLVVEQIQRHHPEVVALADASLLPELKQQLNALPSEQQPPHLPQLLAGPEGLNVAASWDSADLVVSGIVGCAGLLPTLAAIKAGKDLALANKETLIAAAPVVLPELKRSGSRLLPADSEHSAIFQCLQGTPWAENARLSTGVPTPGLRHIQLTASGGAFRDWSAKDLEKATIADATSHPNWSMGRKITVDSATLMNKGLEVIEAHYLFGIDYNQIEIVIHPQSIIHSMIELADSSVLGQLGWPDMKLPILYCLSWPERLETPWRRLNLAEVGELTFRAPDTKKYPCMKLAYAAGRAGGTMPAVLNAANEEAVAQFLEERIHFLDIPEVIEAACERHKPDLQTQPQLDDVLAVDAWARKAVQEQVKRGTRRLPLPALTA</sequence>
<dbReference type="EC" id="1.1.1.267" evidence="1"/>
<dbReference type="EMBL" id="BX548175">
    <property type="protein sequence ID" value="CAE21336.1"/>
    <property type="molecule type" value="Genomic_DNA"/>
</dbReference>
<dbReference type="SMR" id="Q7V6J8"/>
<dbReference type="KEGG" id="pmt:PMT_1161"/>
<dbReference type="eggNOG" id="COG0743">
    <property type="taxonomic scope" value="Bacteria"/>
</dbReference>
<dbReference type="HOGENOM" id="CLU_035714_4_0_3"/>
<dbReference type="UniPathway" id="UPA00056">
    <property type="reaction ID" value="UER00092"/>
</dbReference>
<dbReference type="Proteomes" id="UP000001423">
    <property type="component" value="Chromosome"/>
</dbReference>
<dbReference type="GO" id="GO:0030604">
    <property type="term" value="F:1-deoxy-D-xylulose-5-phosphate reductoisomerase activity"/>
    <property type="evidence" value="ECO:0007669"/>
    <property type="project" value="UniProtKB-UniRule"/>
</dbReference>
<dbReference type="GO" id="GO:0030145">
    <property type="term" value="F:manganese ion binding"/>
    <property type="evidence" value="ECO:0007669"/>
    <property type="project" value="TreeGrafter"/>
</dbReference>
<dbReference type="GO" id="GO:0070402">
    <property type="term" value="F:NADPH binding"/>
    <property type="evidence" value="ECO:0007669"/>
    <property type="project" value="InterPro"/>
</dbReference>
<dbReference type="GO" id="GO:0051484">
    <property type="term" value="P:isopentenyl diphosphate biosynthetic process, methylerythritol 4-phosphate pathway involved in terpenoid biosynthetic process"/>
    <property type="evidence" value="ECO:0007669"/>
    <property type="project" value="TreeGrafter"/>
</dbReference>
<dbReference type="FunFam" id="1.10.1740.10:FF:000004">
    <property type="entry name" value="1-deoxy-D-xylulose 5-phosphate reductoisomerase"/>
    <property type="match status" value="1"/>
</dbReference>
<dbReference type="FunFam" id="3.40.50.720:FF:000045">
    <property type="entry name" value="1-deoxy-D-xylulose 5-phosphate reductoisomerase"/>
    <property type="match status" value="1"/>
</dbReference>
<dbReference type="Gene3D" id="1.10.1740.10">
    <property type="match status" value="1"/>
</dbReference>
<dbReference type="Gene3D" id="3.40.50.720">
    <property type="entry name" value="NAD(P)-binding Rossmann-like Domain"/>
    <property type="match status" value="1"/>
</dbReference>
<dbReference type="HAMAP" id="MF_00183">
    <property type="entry name" value="DXP_reductoisom"/>
    <property type="match status" value="1"/>
</dbReference>
<dbReference type="InterPro" id="IPR003821">
    <property type="entry name" value="DXP_reductoisomerase"/>
</dbReference>
<dbReference type="InterPro" id="IPR013644">
    <property type="entry name" value="DXP_reductoisomerase_C"/>
</dbReference>
<dbReference type="InterPro" id="IPR013512">
    <property type="entry name" value="DXP_reductoisomerase_N"/>
</dbReference>
<dbReference type="InterPro" id="IPR026877">
    <property type="entry name" value="DXPR_C"/>
</dbReference>
<dbReference type="InterPro" id="IPR036169">
    <property type="entry name" value="DXPR_C_sf"/>
</dbReference>
<dbReference type="InterPro" id="IPR036291">
    <property type="entry name" value="NAD(P)-bd_dom_sf"/>
</dbReference>
<dbReference type="NCBIfam" id="TIGR00243">
    <property type="entry name" value="Dxr"/>
    <property type="match status" value="1"/>
</dbReference>
<dbReference type="NCBIfam" id="NF009114">
    <property type="entry name" value="PRK12464.1"/>
    <property type="match status" value="1"/>
</dbReference>
<dbReference type="PANTHER" id="PTHR30525">
    <property type="entry name" value="1-DEOXY-D-XYLULOSE 5-PHOSPHATE REDUCTOISOMERASE"/>
    <property type="match status" value="1"/>
</dbReference>
<dbReference type="PANTHER" id="PTHR30525:SF0">
    <property type="entry name" value="1-DEOXY-D-XYLULOSE 5-PHOSPHATE REDUCTOISOMERASE, CHLOROPLASTIC"/>
    <property type="match status" value="1"/>
</dbReference>
<dbReference type="Pfam" id="PF08436">
    <property type="entry name" value="DXP_redisom_C"/>
    <property type="match status" value="1"/>
</dbReference>
<dbReference type="Pfam" id="PF02670">
    <property type="entry name" value="DXP_reductoisom"/>
    <property type="match status" value="1"/>
</dbReference>
<dbReference type="Pfam" id="PF13288">
    <property type="entry name" value="DXPR_C"/>
    <property type="match status" value="1"/>
</dbReference>
<dbReference type="PIRSF" id="PIRSF006205">
    <property type="entry name" value="Dxp_reductismrs"/>
    <property type="match status" value="1"/>
</dbReference>
<dbReference type="SUPFAM" id="SSF69055">
    <property type="entry name" value="1-deoxy-D-xylulose-5-phosphate reductoisomerase, C-terminal domain"/>
    <property type="match status" value="1"/>
</dbReference>
<dbReference type="SUPFAM" id="SSF55347">
    <property type="entry name" value="Glyceraldehyde-3-phosphate dehydrogenase-like, C-terminal domain"/>
    <property type="match status" value="1"/>
</dbReference>
<dbReference type="SUPFAM" id="SSF51735">
    <property type="entry name" value="NAD(P)-binding Rossmann-fold domains"/>
    <property type="match status" value="1"/>
</dbReference>
<reference key="1">
    <citation type="journal article" date="2003" name="Nature">
        <title>Genome divergence in two Prochlorococcus ecotypes reflects oceanic niche differentiation.</title>
        <authorList>
            <person name="Rocap G."/>
            <person name="Larimer F.W."/>
            <person name="Lamerdin J.E."/>
            <person name="Malfatti S."/>
            <person name="Chain P."/>
            <person name="Ahlgren N.A."/>
            <person name="Arellano A."/>
            <person name="Coleman M."/>
            <person name="Hauser L."/>
            <person name="Hess W.R."/>
            <person name="Johnson Z.I."/>
            <person name="Land M.L."/>
            <person name="Lindell D."/>
            <person name="Post A.F."/>
            <person name="Regala W."/>
            <person name="Shah M."/>
            <person name="Shaw S.L."/>
            <person name="Steglich C."/>
            <person name="Sullivan M.B."/>
            <person name="Ting C.S."/>
            <person name="Tolonen A."/>
            <person name="Webb E.A."/>
            <person name="Zinser E.R."/>
            <person name="Chisholm S.W."/>
        </authorList>
    </citation>
    <scope>NUCLEOTIDE SEQUENCE [LARGE SCALE GENOMIC DNA]</scope>
    <source>
        <strain>MIT 9313</strain>
    </source>
</reference>
<name>DXR_PROMM</name>
<protein>
    <recommendedName>
        <fullName evidence="1">1-deoxy-D-xylulose 5-phosphate reductoisomerase</fullName>
        <shortName evidence="1">DXP reductoisomerase</shortName>
        <ecNumber evidence="1">1.1.1.267</ecNumber>
    </recommendedName>
    <alternativeName>
        <fullName evidence="1">1-deoxyxylulose-5-phosphate reductoisomerase</fullName>
    </alternativeName>
    <alternativeName>
        <fullName evidence="1">2-C-methyl-D-erythritol 4-phosphate synthase</fullName>
    </alternativeName>
</protein>
<proteinExistence type="inferred from homology"/>
<comment type="function">
    <text evidence="1">Catalyzes the NADPH-dependent rearrangement and reduction of 1-deoxy-D-xylulose-5-phosphate (DXP) to 2-C-methyl-D-erythritol 4-phosphate (MEP).</text>
</comment>
<comment type="catalytic activity">
    <reaction evidence="1">
        <text>2-C-methyl-D-erythritol 4-phosphate + NADP(+) = 1-deoxy-D-xylulose 5-phosphate + NADPH + H(+)</text>
        <dbReference type="Rhea" id="RHEA:13717"/>
        <dbReference type="ChEBI" id="CHEBI:15378"/>
        <dbReference type="ChEBI" id="CHEBI:57783"/>
        <dbReference type="ChEBI" id="CHEBI:57792"/>
        <dbReference type="ChEBI" id="CHEBI:58262"/>
        <dbReference type="ChEBI" id="CHEBI:58349"/>
        <dbReference type="EC" id="1.1.1.267"/>
    </reaction>
    <physiologicalReaction direction="right-to-left" evidence="1">
        <dbReference type="Rhea" id="RHEA:13719"/>
    </physiologicalReaction>
</comment>
<comment type="cofactor">
    <cofactor evidence="1">
        <name>Mg(2+)</name>
        <dbReference type="ChEBI" id="CHEBI:18420"/>
    </cofactor>
    <cofactor evidence="1">
        <name>Mn(2+)</name>
        <dbReference type="ChEBI" id="CHEBI:29035"/>
    </cofactor>
</comment>
<comment type="pathway">
    <text evidence="1">Isoprenoid biosynthesis; isopentenyl diphosphate biosynthesis via DXP pathway; isopentenyl diphosphate from 1-deoxy-D-xylulose 5-phosphate: step 1/6.</text>
</comment>
<comment type="similarity">
    <text evidence="1">Belongs to the DXR family.</text>
</comment>
<feature type="chain" id="PRO_0000163693" description="1-deoxy-D-xylulose 5-phosphate reductoisomerase">
    <location>
        <begin position="1"/>
        <end position="412"/>
    </location>
</feature>
<feature type="binding site" evidence="1">
    <location>
        <position position="5"/>
    </location>
    <ligand>
        <name>NADPH</name>
        <dbReference type="ChEBI" id="CHEBI:57783"/>
    </ligand>
</feature>
<feature type="binding site" evidence="1">
    <location>
        <position position="6"/>
    </location>
    <ligand>
        <name>NADPH</name>
        <dbReference type="ChEBI" id="CHEBI:57783"/>
    </ligand>
</feature>
<feature type="binding site" evidence="1">
    <location>
        <position position="7"/>
    </location>
    <ligand>
        <name>NADPH</name>
        <dbReference type="ChEBI" id="CHEBI:57783"/>
    </ligand>
</feature>
<feature type="binding site" evidence="1">
    <location>
        <position position="8"/>
    </location>
    <ligand>
        <name>NADPH</name>
        <dbReference type="ChEBI" id="CHEBI:57783"/>
    </ligand>
</feature>
<feature type="binding site" evidence="1">
    <location>
        <position position="31"/>
    </location>
    <ligand>
        <name>NADPH</name>
        <dbReference type="ChEBI" id="CHEBI:57783"/>
    </ligand>
</feature>
<feature type="binding site" evidence="1">
    <location>
        <position position="33"/>
    </location>
    <ligand>
        <name>NADPH</name>
        <dbReference type="ChEBI" id="CHEBI:57783"/>
    </ligand>
</feature>
<feature type="binding site" evidence="1">
    <location>
        <position position="125"/>
    </location>
    <ligand>
        <name>NADPH</name>
        <dbReference type="ChEBI" id="CHEBI:57783"/>
    </ligand>
</feature>
<feature type="binding site" evidence="1">
    <location>
        <position position="126"/>
    </location>
    <ligand>
        <name>1-deoxy-D-xylulose 5-phosphate</name>
        <dbReference type="ChEBI" id="CHEBI:57792"/>
    </ligand>
</feature>
<feature type="binding site" evidence="1">
    <location>
        <position position="127"/>
    </location>
    <ligand>
        <name>NADPH</name>
        <dbReference type="ChEBI" id="CHEBI:57783"/>
    </ligand>
</feature>
<feature type="binding site" evidence="1">
    <location>
        <position position="151"/>
    </location>
    <ligand>
        <name>Mn(2+)</name>
        <dbReference type="ChEBI" id="CHEBI:29035"/>
    </ligand>
</feature>
<feature type="binding site" evidence="1">
    <location>
        <position position="152"/>
    </location>
    <ligand>
        <name>1-deoxy-D-xylulose 5-phosphate</name>
        <dbReference type="ChEBI" id="CHEBI:57792"/>
    </ligand>
</feature>
<feature type="binding site" evidence="1">
    <location>
        <position position="153"/>
    </location>
    <ligand>
        <name>1-deoxy-D-xylulose 5-phosphate</name>
        <dbReference type="ChEBI" id="CHEBI:57792"/>
    </ligand>
</feature>
<feature type="binding site" evidence="1">
    <location>
        <position position="153"/>
    </location>
    <ligand>
        <name>Mn(2+)</name>
        <dbReference type="ChEBI" id="CHEBI:29035"/>
    </ligand>
</feature>
<feature type="binding site" evidence="1">
    <location>
        <position position="189"/>
    </location>
    <ligand>
        <name>1-deoxy-D-xylulose 5-phosphate</name>
        <dbReference type="ChEBI" id="CHEBI:57792"/>
    </ligand>
</feature>
<feature type="binding site" evidence="1">
    <location>
        <position position="212"/>
    </location>
    <ligand>
        <name>1-deoxy-D-xylulose 5-phosphate</name>
        <dbReference type="ChEBI" id="CHEBI:57792"/>
    </ligand>
</feature>
<feature type="binding site" evidence="1">
    <location>
        <position position="218"/>
    </location>
    <ligand>
        <name>NADPH</name>
        <dbReference type="ChEBI" id="CHEBI:57783"/>
    </ligand>
</feature>
<feature type="binding site" evidence="1">
    <location>
        <position position="225"/>
    </location>
    <ligand>
        <name>1-deoxy-D-xylulose 5-phosphate</name>
        <dbReference type="ChEBI" id="CHEBI:57792"/>
    </ligand>
</feature>
<feature type="binding site" evidence="1">
    <location>
        <position position="230"/>
    </location>
    <ligand>
        <name>1-deoxy-D-xylulose 5-phosphate</name>
        <dbReference type="ChEBI" id="CHEBI:57792"/>
    </ligand>
</feature>
<feature type="binding site" evidence="1">
    <location>
        <position position="231"/>
    </location>
    <ligand>
        <name>1-deoxy-D-xylulose 5-phosphate</name>
        <dbReference type="ChEBI" id="CHEBI:57792"/>
    </ligand>
</feature>
<feature type="binding site" evidence="1">
    <location>
        <position position="234"/>
    </location>
    <ligand>
        <name>1-deoxy-D-xylulose 5-phosphate</name>
        <dbReference type="ChEBI" id="CHEBI:57792"/>
    </ligand>
</feature>
<feature type="binding site" evidence="1">
    <location>
        <position position="234"/>
    </location>
    <ligand>
        <name>Mn(2+)</name>
        <dbReference type="ChEBI" id="CHEBI:29035"/>
    </ligand>
</feature>